<organism>
    <name type="scientific">Neurospora crassa (strain ATCC 24698 / 74-OR23-1A / CBS 708.71 / DSM 1257 / FGSC 987)</name>
    <dbReference type="NCBI Taxonomy" id="367110"/>
    <lineage>
        <taxon>Eukaryota</taxon>
        <taxon>Fungi</taxon>
        <taxon>Dikarya</taxon>
        <taxon>Ascomycota</taxon>
        <taxon>Pezizomycotina</taxon>
        <taxon>Sordariomycetes</taxon>
        <taxon>Sordariomycetidae</taxon>
        <taxon>Sordariales</taxon>
        <taxon>Sordariaceae</taxon>
        <taxon>Neurospora</taxon>
    </lineage>
</organism>
<feature type="chain" id="PRO_0000227726" description="Histone acetyltransferase type B catalytic subunit">
    <location>
        <begin position="1"/>
        <end position="508"/>
    </location>
</feature>
<feature type="region of interest" description="Interaction with histone H4 N-terminus" evidence="3">
    <location>
        <begin position="44"/>
        <end position="46"/>
    </location>
</feature>
<feature type="region of interest" description="Interaction with histone H4 N-terminus" evidence="3">
    <location>
        <begin position="207"/>
        <end position="209"/>
    </location>
</feature>
<feature type="region of interest" description="Disordered" evidence="4">
    <location>
        <begin position="364"/>
        <end position="399"/>
    </location>
</feature>
<feature type="region of interest" description="Disordered" evidence="4">
    <location>
        <begin position="461"/>
        <end position="508"/>
    </location>
</feature>
<feature type="compositionally biased region" description="Basic and acidic residues" evidence="4">
    <location>
        <begin position="387"/>
        <end position="399"/>
    </location>
</feature>
<feature type="active site" description="Proton donor/acceptor" evidence="3">
    <location>
        <position position="284"/>
    </location>
</feature>
<feature type="binding site" evidence="3">
    <location>
        <begin position="249"/>
        <end position="251"/>
    </location>
    <ligand>
        <name>acetyl-CoA</name>
        <dbReference type="ChEBI" id="CHEBI:57288"/>
    </ligand>
</feature>
<feature type="binding site" evidence="3">
    <location>
        <begin position="256"/>
        <end position="262"/>
    </location>
    <ligand>
        <name>acetyl-CoA</name>
        <dbReference type="ChEBI" id="CHEBI:57288"/>
    </ligand>
</feature>
<feature type="site" description="Interaction with histone H4 N-terminus" evidence="2">
    <location>
        <position position="178"/>
    </location>
</feature>
<reference key="1">
    <citation type="journal article" date="2003" name="Nature">
        <title>The genome sequence of the filamentous fungus Neurospora crassa.</title>
        <authorList>
            <person name="Galagan J.E."/>
            <person name="Calvo S.E."/>
            <person name="Borkovich K.A."/>
            <person name="Selker E.U."/>
            <person name="Read N.D."/>
            <person name="Jaffe D.B."/>
            <person name="FitzHugh W."/>
            <person name="Ma L.-J."/>
            <person name="Smirnov S."/>
            <person name="Purcell S."/>
            <person name="Rehman B."/>
            <person name="Elkins T."/>
            <person name="Engels R."/>
            <person name="Wang S."/>
            <person name="Nielsen C.B."/>
            <person name="Butler J."/>
            <person name="Endrizzi M."/>
            <person name="Qui D."/>
            <person name="Ianakiev P."/>
            <person name="Bell-Pedersen D."/>
            <person name="Nelson M.A."/>
            <person name="Werner-Washburne M."/>
            <person name="Selitrennikoff C.P."/>
            <person name="Kinsey J.A."/>
            <person name="Braun E.L."/>
            <person name="Zelter A."/>
            <person name="Schulte U."/>
            <person name="Kothe G.O."/>
            <person name="Jedd G."/>
            <person name="Mewes H.-W."/>
            <person name="Staben C."/>
            <person name="Marcotte E."/>
            <person name="Greenberg D."/>
            <person name="Roy A."/>
            <person name="Foley K."/>
            <person name="Naylor J."/>
            <person name="Stange-Thomann N."/>
            <person name="Barrett R."/>
            <person name="Gnerre S."/>
            <person name="Kamal M."/>
            <person name="Kamvysselis M."/>
            <person name="Mauceli E.W."/>
            <person name="Bielke C."/>
            <person name="Rudd S."/>
            <person name="Frishman D."/>
            <person name="Krystofova S."/>
            <person name="Rasmussen C."/>
            <person name="Metzenberg R.L."/>
            <person name="Perkins D.D."/>
            <person name="Kroken S."/>
            <person name="Cogoni C."/>
            <person name="Macino G."/>
            <person name="Catcheside D.E.A."/>
            <person name="Li W."/>
            <person name="Pratt R.J."/>
            <person name="Osmani S.A."/>
            <person name="DeSouza C.P.C."/>
            <person name="Glass N.L."/>
            <person name="Orbach M.J."/>
            <person name="Berglund J.A."/>
            <person name="Voelker R."/>
            <person name="Yarden O."/>
            <person name="Plamann M."/>
            <person name="Seiler S."/>
            <person name="Dunlap J.C."/>
            <person name="Radford A."/>
            <person name="Aramayo R."/>
            <person name="Natvig D.O."/>
            <person name="Alex L.A."/>
            <person name="Mannhaupt G."/>
            <person name="Ebbole D.J."/>
            <person name="Freitag M."/>
            <person name="Paulsen I."/>
            <person name="Sachs M.S."/>
            <person name="Lander E.S."/>
            <person name="Nusbaum C."/>
            <person name="Birren B.W."/>
        </authorList>
    </citation>
    <scope>NUCLEOTIDE SEQUENCE [LARGE SCALE GENOMIC DNA]</scope>
    <source>
        <strain>ATCC 24698 / 74-OR23-1A / CBS 708.71 / DSM 1257 / FGSC 987</strain>
    </source>
</reference>
<sequence>MSGDDDWWTSSNEALLVSLVTPSDTGVKTLDTFHPEYTNNIFGEKEQIFGYKGLRINLQYNASDMLPNLKVSYKKKYQPTADEEALDINEVLSEFLPEIAFQKQSDFETRLKSIPDNWTPPGTLVTSFTNKDGEYEVYSGKITDPAVKQLLNRIQILVPFFVDGGTPIDMEDPDVDRWTIYFLYNKRPLLNQPDKFSYHFAGYSTLYRYYAFQPPAESESKTPTDTPTFSVDGDFDLDTLPCRTRISQFIIIPPFQQKGLGSRLYSIIYQQYLKHEPTIELTVEDPNEAFDDMRDLADLAFLSKQPEFQALKIDTSVEIPEEGKAPSNIVDQAAWEACRKKFKIVPRQFARVLEMYLMSQLPESVRPGLGAPEDEDYEEQSGRSKSKGHEKALPKPTPEDEHTYRLWMMLVKRRLYVHNRDALGQLELKERREELAKVFAGVEFDYARLLIKAEEQGKLAQADGETAGDQVPATPSAANGKRKLDEVEQAEGTAAASSKKAKVESGHA</sequence>
<evidence type="ECO:0000250" key="1"/>
<evidence type="ECO:0000250" key="2">
    <source>
        <dbReference type="UniProtKB" id="O14929"/>
    </source>
</evidence>
<evidence type="ECO:0000250" key="3">
    <source>
        <dbReference type="UniProtKB" id="Q12341"/>
    </source>
</evidence>
<evidence type="ECO:0000256" key="4">
    <source>
        <dbReference type="SAM" id="MobiDB-lite"/>
    </source>
</evidence>
<evidence type="ECO:0000305" key="5"/>
<accession>Q7RYU8</accession>
<dbReference type="EC" id="2.3.1.48" evidence="3"/>
<dbReference type="EMBL" id="CM002238">
    <property type="protein sequence ID" value="EAA28127.1"/>
    <property type="molecule type" value="Genomic_DNA"/>
</dbReference>
<dbReference type="RefSeq" id="XP_957363.1">
    <property type="nucleotide sequence ID" value="XM_952270.3"/>
</dbReference>
<dbReference type="SMR" id="Q7RYU8"/>
<dbReference type="FunCoup" id="Q7RYU8">
    <property type="interactions" value="1094"/>
</dbReference>
<dbReference type="STRING" id="367110.Q7RYU8"/>
<dbReference type="PaxDb" id="5141-EFNCRP00000006210"/>
<dbReference type="EnsemblFungi" id="EAA28127">
    <property type="protein sequence ID" value="EAA28127"/>
    <property type="gene ID" value="NCU06472"/>
</dbReference>
<dbReference type="GeneID" id="3873462"/>
<dbReference type="KEGG" id="ncr:NCU06472"/>
<dbReference type="VEuPathDB" id="FungiDB:NCU06472"/>
<dbReference type="HOGENOM" id="CLU_036024_2_1_1"/>
<dbReference type="InParanoid" id="Q7RYU8"/>
<dbReference type="OMA" id="WTCDAND"/>
<dbReference type="OrthoDB" id="10253098at2759"/>
<dbReference type="Proteomes" id="UP000001805">
    <property type="component" value="Chromosome 3, Linkage Group III"/>
</dbReference>
<dbReference type="GO" id="GO:0000781">
    <property type="term" value="C:chromosome, telomeric region"/>
    <property type="evidence" value="ECO:0007669"/>
    <property type="project" value="GOC"/>
</dbReference>
<dbReference type="GO" id="GO:0005737">
    <property type="term" value="C:cytoplasm"/>
    <property type="evidence" value="ECO:0007669"/>
    <property type="project" value="UniProtKB-SubCell"/>
</dbReference>
<dbReference type="GO" id="GO:0005634">
    <property type="term" value="C:nucleus"/>
    <property type="evidence" value="ECO:0007669"/>
    <property type="project" value="UniProtKB-SubCell"/>
</dbReference>
<dbReference type="GO" id="GO:0042393">
    <property type="term" value="F:histone binding"/>
    <property type="evidence" value="ECO:0007669"/>
    <property type="project" value="InterPro"/>
</dbReference>
<dbReference type="GO" id="GO:0010485">
    <property type="term" value="F:histone H4 acetyltransferase activity"/>
    <property type="evidence" value="ECO:0000318"/>
    <property type="project" value="GO_Central"/>
</dbReference>
<dbReference type="GO" id="GO:0006281">
    <property type="term" value="P:DNA repair"/>
    <property type="evidence" value="ECO:0007669"/>
    <property type="project" value="UniProtKB-KW"/>
</dbReference>
<dbReference type="GO" id="GO:0031509">
    <property type="term" value="P:subtelomeric heterochromatin formation"/>
    <property type="evidence" value="ECO:0007669"/>
    <property type="project" value="InterPro"/>
</dbReference>
<dbReference type="FunFam" id="1.10.10.390:FF:000004">
    <property type="entry name" value="Histone acetyltransferase type B catalytic subunit"/>
    <property type="match status" value="1"/>
</dbReference>
<dbReference type="FunFam" id="3.40.630.30:FF:000125">
    <property type="entry name" value="Histone acetyltransferase type B catalytic subunit"/>
    <property type="match status" value="1"/>
</dbReference>
<dbReference type="Gene3D" id="1.10.10.390">
    <property type="match status" value="1"/>
</dbReference>
<dbReference type="Gene3D" id="3.40.630.30">
    <property type="match status" value="1"/>
</dbReference>
<dbReference type="Gene3D" id="3.90.360.10">
    <property type="entry name" value="Histone acetyl transferase 1 (HAT1), N-terminal domain"/>
    <property type="match status" value="1"/>
</dbReference>
<dbReference type="InterPro" id="IPR016181">
    <property type="entry name" value="Acyl_CoA_acyltransferase"/>
</dbReference>
<dbReference type="InterPro" id="IPR019467">
    <property type="entry name" value="Hat1_N"/>
</dbReference>
<dbReference type="InterPro" id="IPR037113">
    <property type="entry name" value="Hat1_N_sf"/>
</dbReference>
<dbReference type="InterPro" id="IPR017380">
    <property type="entry name" value="Hist_AcTrfase_B-typ_cat-su"/>
</dbReference>
<dbReference type="InterPro" id="IPR013523">
    <property type="entry name" value="Hist_AcTrfase_HAT1_C"/>
</dbReference>
<dbReference type="PANTHER" id="PTHR12046">
    <property type="entry name" value="HISTONE ACETYLTRANSFERASE TYPE B CATALYTIC SUBUNIT"/>
    <property type="match status" value="1"/>
</dbReference>
<dbReference type="Pfam" id="PF21184">
    <property type="entry name" value="HAT1_C_fung"/>
    <property type="match status" value="1"/>
</dbReference>
<dbReference type="Pfam" id="PF10394">
    <property type="entry name" value="Hat1_N"/>
    <property type="match status" value="1"/>
</dbReference>
<dbReference type="PIRSF" id="PIRSF038084">
    <property type="entry name" value="HAT-B_cat"/>
    <property type="match status" value="1"/>
</dbReference>
<dbReference type="SUPFAM" id="SSF55729">
    <property type="entry name" value="Acyl-CoA N-acyltransferases (Nat)"/>
    <property type="match status" value="1"/>
</dbReference>
<gene>
    <name type="primary">hat-1</name>
    <name type="ORF">NCU06472</name>
</gene>
<proteinExistence type="inferred from homology"/>
<comment type="function">
    <text evidence="3">Catalytic component of the histone acetylase B (HAT-B) complex. Acetylates 'Lys-12' of histone H4 which is required for telomeric silencing. Has intrinsic substrate specificity that modifies lysine in recognition sequence GXGKXG. Involved in DNA double-strand break repair.</text>
</comment>
<comment type="catalytic activity">
    <reaction evidence="3">
        <text>L-lysyl-[protein] + acetyl-CoA = N(6)-acetyl-L-lysyl-[protein] + CoA + H(+)</text>
        <dbReference type="Rhea" id="RHEA:45948"/>
        <dbReference type="Rhea" id="RHEA-COMP:9752"/>
        <dbReference type="Rhea" id="RHEA-COMP:10731"/>
        <dbReference type="ChEBI" id="CHEBI:15378"/>
        <dbReference type="ChEBI" id="CHEBI:29969"/>
        <dbReference type="ChEBI" id="CHEBI:57287"/>
        <dbReference type="ChEBI" id="CHEBI:57288"/>
        <dbReference type="ChEBI" id="CHEBI:61930"/>
        <dbReference type="EC" id="2.3.1.48"/>
    </reaction>
</comment>
<comment type="subunit">
    <text evidence="3">Component of the HAT-B complex composed of at least hat-1 and hat-2. The HAT-B complex binds to histone H4 tail.</text>
</comment>
<comment type="subcellular location">
    <subcellularLocation>
        <location evidence="1">Cytoplasm</location>
    </subcellularLocation>
    <subcellularLocation>
        <location evidence="1">Nucleus</location>
    </subcellularLocation>
</comment>
<comment type="similarity">
    <text evidence="5">Belongs to the HAT1 family.</text>
</comment>
<protein>
    <recommendedName>
        <fullName>Histone acetyltransferase type B catalytic subunit</fullName>
        <ecNumber evidence="3">2.3.1.48</ecNumber>
    </recommendedName>
</protein>
<name>HAT1_NEUCR</name>
<keyword id="KW-0012">Acyltransferase</keyword>
<keyword id="KW-0156">Chromatin regulator</keyword>
<keyword id="KW-0963">Cytoplasm</keyword>
<keyword id="KW-0227">DNA damage</keyword>
<keyword id="KW-0234">DNA repair</keyword>
<keyword id="KW-0539">Nucleus</keyword>
<keyword id="KW-1185">Reference proteome</keyword>
<keyword id="KW-0808">Transferase</keyword>